<comment type="function">
    <text evidence="1">Cholesterol transporter that mediates non-vesicular transport of cholesterol from the plasma membrane (PM) to the endoplasmic reticulum (ER) (By similarity). Contains unique domains for binding cholesterol and the PM, thereby serving as a molecular bridge for the transfer of cholesterol from the PM to the ER (By similarity). Plays a crucial role in cholesterol homeostasis and has the unique ability to localize to the PM based on the level of membrane cholesterol (By similarity). In lipid-poor conditions localizes to the ER membrane and in response to excess cholesterol in the PM is recruited to the endoplasmic reticulum-plasma membrane contact sites (EPCS) which is mediated by the GRAM domain (By similarity). At the EPCS, the sterol-binding VASt/ASTER domain binds to the cholesterol in the PM and facilitates its transfer from the PM to ER (By similarity).</text>
</comment>
<comment type="subcellular location">
    <subcellularLocation>
        <location evidence="1">Endoplasmic reticulum membrane</location>
        <topology evidence="2">Single-pass membrane protein</topology>
    </subcellularLocation>
    <subcellularLocation>
        <location evidence="1">Cell membrane</location>
        <topology evidence="2">Single-pass membrane protein</topology>
    </subcellularLocation>
    <text evidence="1">In lipid-poor conditions localizes to the ER membrane and in response to excess cholesterol in the PM is recruited to the endoplasmic reticulum-plasma membrane contact sites (EPCS).</text>
</comment>
<comment type="domain">
    <text evidence="1">GRAM domain binds phosphatidylserine in the PM and mediates protein recruitment to endoplasmic reticulum-plasma membrane contact sites (EPCS) in response to excess cholesterol in the PM.</text>
</comment>
<comment type="domain">
    <text evidence="1">VASt (VAD1 Analog of StAR-related lipid transfer) domain, also known as ASTER (Greek for star) domain is a sterol-binding domain.</text>
</comment>
<dbReference type="EMBL" id="CR858449">
    <property type="protein sequence ID" value="CAH90677.1"/>
    <property type="molecule type" value="mRNA"/>
</dbReference>
<dbReference type="RefSeq" id="NP_001125369.1">
    <property type="nucleotide sequence ID" value="NM_001131897.2"/>
</dbReference>
<dbReference type="SMR" id="Q5RC33"/>
<dbReference type="FunCoup" id="Q5RC33">
    <property type="interactions" value="807"/>
</dbReference>
<dbReference type="STRING" id="9601.ENSPPYP00000015133"/>
<dbReference type="GeneID" id="100172272"/>
<dbReference type="KEGG" id="pon:100172272"/>
<dbReference type="CTD" id="54762"/>
<dbReference type="eggNOG" id="KOG1032">
    <property type="taxonomic scope" value="Eukaryota"/>
</dbReference>
<dbReference type="InParanoid" id="Q5RC33"/>
<dbReference type="OrthoDB" id="2162691at2759"/>
<dbReference type="Proteomes" id="UP000001595">
    <property type="component" value="Unplaced"/>
</dbReference>
<dbReference type="GO" id="GO:0005789">
    <property type="term" value="C:endoplasmic reticulum membrane"/>
    <property type="evidence" value="ECO:0000250"/>
    <property type="project" value="UniProtKB"/>
</dbReference>
<dbReference type="GO" id="GO:0140268">
    <property type="term" value="C:endoplasmic reticulum-plasma membrane contact site"/>
    <property type="evidence" value="ECO:0000250"/>
    <property type="project" value="UniProtKB"/>
</dbReference>
<dbReference type="GO" id="GO:0005886">
    <property type="term" value="C:plasma membrane"/>
    <property type="evidence" value="ECO:0000250"/>
    <property type="project" value="UniProtKB"/>
</dbReference>
<dbReference type="GO" id="GO:0015485">
    <property type="term" value="F:cholesterol binding"/>
    <property type="evidence" value="ECO:0000250"/>
    <property type="project" value="UniProtKB"/>
</dbReference>
<dbReference type="GO" id="GO:0120020">
    <property type="term" value="F:cholesterol transfer activity"/>
    <property type="evidence" value="ECO:0000250"/>
    <property type="project" value="UniProtKB"/>
</dbReference>
<dbReference type="GO" id="GO:0071397">
    <property type="term" value="P:cellular response to cholesterol"/>
    <property type="evidence" value="ECO:0000250"/>
    <property type="project" value="UniProtKB"/>
</dbReference>
<dbReference type="GO" id="GO:0032366">
    <property type="term" value="P:intracellular sterol transport"/>
    <property type="evidence" value="ECO:0007669"/>
    <property type="project" value="TreeGrafter"/>
</dbReference>
<dbReference type="CDD" id="cd13220">
    <property type="entry name" value="PH-GRAM_GRAMDC"/>
    <property type="match status" value="1"/>
</dbReference>
<dbReference type="FunFam" id="2.30.29.30:FF:000008">
    <property type="entry name" value="GRAM domain containing 1B"/>
    <property type="match status" value="1"/>
</dbReference>
<dbReference type="Gene3D" id="2.30.29.30">
    <property type="entry name" value="Pleckstrin-homology domain (PH domain)/Phosphotyrosine-binding domain (PTB)"/>
    <property type="match status" value="1"/>
</dbReference>
<dbReference type="InterPro" id="IPR051482">
    <property type="entry name" value="Cholesterol_transport"/>
</dbReference>
<dbReference type="InterPro" id="IPR004182">
    <property type="entry name" value="GRAM"/>
</dbReference>
<dbReference type="InterPro" id="IPR011993">
    <property type="entry name" value="PH-like_dom_sf"/>
</dbReference>
<dbReference type="InterPro" id="IPR031968">
    <property type="entry name" value="VASt"/>
</dbReference>
<dbReference type="PANTHER" id="PTHR23319">
    <property type="entry name" value="GRAM DOMAIN CONTAINING 1B, ISOFORM E"/>
    <property type="match status" value="1"/>
</dbReference>
<dbReference type="PANTHER" id="PTHR23319:SF1">
    <property type="entry name" value="PROTEIN ASTER-C"/>
    <property type="match status" value="1"/>
</dbReference>
<dbReference type="Pfam" id="PF02893">
    <property type="entry name" value="GRAM"/>
    <property type="match status" value="1"/>
</dbReference>
<dbReference type="Pfam" id="PF16016">
    <property type="entry name" value="VASt"/>
    <property type="match status" value="1"/>
</dbReference>
<dbReference type="SMART" id="SM00568">
    <property type="entry name" value="GRAM"/>
    <property type="match status" value="1"/>
</dbReference>
<dbReference type="PROSITE" id="PS51778">
    <property type="entry name" value="VAST"/>
    <property type="match status" value="1"/>
</dbReference>
<sequence length="662" mass="76115">MEGAPTVRQVMNEGDSSLATELQEDVEENPSPTVEENNVVVKKQGPNLHNWSGDWSFWISSSTYKDRNEEYRRQFTHLPDTERLIADYACALQRDILLQGRLYLSENWLCFYSNIFRWETTISIALKNITFMTKEKTARLIPNAIQIVTESEKFFFTSFGARDRSYLSIFRLWQNVLLDKSLTRQEFWQLLQQNYGTELGLNAEEMENLSLSIEDVRPRSPGRSSLDDSGERDEKLSKSISFTSESISRVSETESFDGNSSKGGLGKEESQNEKQTKKSLLPTLEKKLTRVPSKSLDLNKNEYLSLEKSSTSDSVDEENVPEKDLHGRLFINRIFHISADRMFELLFTSSRFMQKFASSRNIIDVVSTPWTAELGGDQLRTMTYTIVLNSPLTGKCTAATEKQTLYKESREARFYMVDSEVLTHDVPYHDYFYTVDRYCIIRSSKQKCRLRVSTDLKYRKQPWGLVKSLIEKNSWGSLEDYFKHLESDLLIEESILNQAIEDPGKLTGLRRRRRTFNRTAETVPKLSSQHSSGDVGLGTKADITGKKKEMENYNITLIVVMSIFVLLLVLLNVTLFLKLSKIEHAAQSFYRLRLQEEKSLNLASDVVSRAETIQNNKDQAHRLKGVLRDSIVMLEQLKSSLIMLQKTFDLLNKNKTGMAVES</sequence>
<evidence type="ECO:0000250" key="1">
    <source>
        <dbReference type="UniProtKB" id="Q8CI52"/>
    </source>
</evidence>
<evidence type="ECO:0000255" key="2"/>
<evidence type="ECO:0000255" key="3">
    <source>
        <dbReference type="PROSITE-ProRule" id="PRU01114"/>
    </source>
</evidence>
<evidence type="ECO:0000256" key="4">
    <source>
        <dbReference type="SAM" id="MobiDB-lite"/>
    </source>
</evidence>
<keyword id="KW-1003">Cell membrane</keyword>
<keyword id="KW-0256">Endoplasmic reticulum</keyword>
<keyword id="KW-0445">Lipid transport</keyword>
<keyword id="KW-0446">Lipid-binding</keyword>
<keyword id="KW-0472">Membrane</keyword>
<keyword id="KW-1185">Reference proteome</keyword>
<keyword id="KW-0812">Transmembrane</keyword>
<keyword id="KW-1133">Transmembrane helix</keyword>
<keyword id="KW-0813">Transport</keyword>
<reference key="1">
    <citation type="submission" date="2004-11" db="EMBL/GenBank/DDBJ databases">
        <authorList>
            <consortium name="The German cDNA consortium"/>
        </authorList>
    </citation>
    <scope>NUCLEOTIDE SEQUENCE [LARGE SCALE MRNA]</scope>
    <source>
        <tissue>Kidney</tissue>
    </source>
</reference>
<gene>
    <name type="primary">GRAMD1C</name>
</gene>
<proteinExistence type="evidence at transcript level"/>
<name>ASTRC_PONAB</name>
<accession>Q5RC33</accession>
<feature type="chain" id="PRO_0000287453" description="Protein Aster-C">
    <location>
        <begin position="1"/>
        <end position="662"/>
    </location>
</feature>
<feature type="transmembrane region" description="Helical" evidence="2">
    <location>
        <begin position="557"/>
        <end position="577"/>
    </location>
</feature>
<feature type="domain" description="GRAM" evidence="2">
    <location>
        <begin position="69"/>
        <end position="136"/>
    </location>
</feature>
<feature type="domain" description="VASt" evidence="3">
    <location>
        <begin position="326"/>
        <end position="497"/>
    </location>
</feature>
<feature type="region of interest" description="Disordered" evidence="4">
    <location>
        <begin position="1"/>
        <end position="34"/>
    </location>
</feature>
<feature type="region of interest" description="Disordered" evidence="4">
    <location>
        <begin position="212"/>
        <end position="237"/>
    </location>
</feature>
<feature type="region of interest" description="Disordered" evidence="4">
    <location>
        <begin position="250"/>
        <end position="284"/>
    </location>
</feature>
<feature type="compositionally biased region" description="Basic and acidic residues" evidence="4">
    <location>
        <begin position="265"/>
        <end position="276"/>
    </location>
</feature>
<organism>
    <name type="scientific">Pongo abelii</name>
    <name type="common">Sumatran orangutan</name>
    <name type="synonym">Pongo pygmaeus abelii</name>
    <dbReference type="NCBI Taxonomy" id="9601"/>
    <lineage>
        <taxon>Eukaryota</taxon>
        <taxon>Metazoa</taxon>
        <taxon>Chordata</taxon>
        <taxon>Craniata</taxon>
        <taxon>Vertebrata</taxon>
        <taxon>Euteleostomi</taxon>
        <taxon>Mammalia</taxon>
        <taxon>Eutheria</taxon>
        <taxon>Euarchontoglires</taxon>
        <taxon>Primates</taxon>
        <taxon>Haplorrhini</taxon>
        <taxon>Catarrhini</taxon>
        <taxon>Hominidae</taxon>
        <taxon>Pongo</taxon>
    </lineage>
</organism>
<protein>
    <recommendedName>
        <fullName evidence="1">Protein Aster-C</fullName>
    </recommendedName>
    <alternativeName>
        <fullName>GRAM domain-containing protein 1C</fullName>
    </alternativeName>
</protein>